<feature type="chain" id="PRO_0000378411" description="RNA-directed RNA polymerase">
    <location>
        <begin position="1"/>
        <end position="879"/>
    </location>
</feature>
<feature type="domain" description="RdRp catalytic" evidence="3">
    <location>
        <begin position="398"/>
        <end position="598"/>
    </location>
</feature>
<feature type="region of interest" description="Disordered" evidence="4">
    <location>
        <begin position="846"/>
        <end position="879"/>
    </location>
</feature>
<feature type="binding site" evidence="2">
    <location>
        <begin position="259"/>
        <end position="266"/>
    </location>
    <ligand>
        <name>GTP</name>
        <dbReference type="ChEBI" id="CHEBI:37565"/>
    </ligand>
</feature>
<evidence type="ECO:0000250" key="1"/>
<evidence type="ECO:0000255" key="2"/>
<evidence type="ECO:0000255" key="3">
    <source>
        <dbReference type="PROSITE-ProRule" id="PRU00539"/>
    </source>
</evidence>
<evidence type="ECO:0000256" key="4">
    <source>
        <dbReference type="SAM" id="MobiDB-lite"/>
    </source>
</evidence>
<proteinExistence type="evidence at transcript level"/>
<comment type="function">
    <text evidence="1">RNA-dependent RNA polymerase which is found both free and covalently attached to the genomic RNA. May also contain guanylyl and methyl transferase activities (By similarity).</text>
</comment>
<comment type="catalytic activity">
    <reaction evidence="3">
        <text>RNA(n) + a ribonucleoside 5'-triphosphate = RNA(n+1) + diphosphate</text>
        <dbReference type="Rhea" id="RHEA:21248"/>
        <dbReference type="Rhea" id="RHEA-COMP:14527"/>
        <dbReference type="Rhea" id="RHEA-COMP:17342"/>
        <dbReference type="ChEBI" id="CHEBI:33019"/>
        <dbReference type="ChEBI" id="CHEBI:61557"/>
        <dbReference type="ChEBI" id="CHEBI:140395"/>
        <dbReference type="EC" id="2.7.7.48"/>
    </reaction>
</comment>
<comment type="subunit">
    <text evidence="1">Interacts with VP3 in the cytoplasm.</text>
</comment>
<comment type="subcellular location">
    <subcellularLocation>
        <location evidence="1">Virion</location>
    </subcellularLocation>
    <text evidence="1">Minor amounts are incorporated in the virion.</text>
</comment>
<comment type="PTM">
    <text>May exist in multiple phosphorylated forms.</text>
</comment>
<name>RDRP_IBDVB</name>
<gene>
    <name type="primary">VP1</name>
</gene>
<organismHost>
    <name type="scientific">Gallus gallus</name>
    <name type="common">Chicken</name>
    <dbReference type="NCBI Taxonomy" id="9031"/>
</organismHost>
<organismHost>
    <name type="scientific">Meleagris gallopavo</name>
    <name type="common">Wild turkey</name>
    <dbReference type="NCBI Taxonomy" id="9103"/>
</organismHost>
<sequence length="879" mass="97685">MSDVFNSPQARSTISAAFGIKPTAGQDVEELLIPKVWVPPEDPLASPSRLAKFLRENGYKVLQPRSLPENEEYETDQILPDLAWMRQIEGAVLKPTLSLPIGDQEYFPKYYPTHRPSKEKPNAYPPDIALLKQMIYLFLQVPEANEGLKDEVTLLTQNIRDKAYGSGTYMGQANRLVAMKEVATGRNPNKDPLKLGYTFESIAQLLDITLPVGPPGEDDKPWVPLTRVPSRMLVLTGDVDGDFEVEDYLPKINLKSSSGLPYVGRTKGETIGEMIAISNQFLRELSTLLKQGAGTKGSNKKKLLSMLSDYWYLSCGLLFPKAERYDKSTWLTKTRNIWSAPSPTHLMISMITWPVMSNSPNNVLNIEGCPSLYKFNPFRGGLNRIVEWILAPEEPKALVYADNIYIVHSNTWYSIDLEKGEANCTRQHMQAAMYYILTRGWSDNGDPMFNQTWATFAMNIAPALVVDSSCLIMNLQIKTYGQGSGNAATFINNHLLSTLVLDQWNLMRQPRPDSEEFKSIEDKLGINFKIERSIDDIRGKLRQLVLLAQPGYLSGGVEPEQSSPTVELDLLGWSATYSKDLGIYVPVLDKERLFCSAAYPKGVENKSLKSKVGIEQAYKVVRYEALRLVGGWNYPLLNKACKNNAGAARRHLEAKGFPLDEFLAEWSELSEFGEAFEGFNIKLTVTSESLAELNKPVPPKPPNVNRPVNTGGLKAVSNALKTGRYRNEAGLSGLVLLATARSRLQDAVKAKAEAEKLHKSKPDDPDADWFERSETLSDLLEKADIASKVAHSALVETSDALEAVQSTSVYTPKYPEVKNPQTASNPVVGLHLPAKRATGVQAALLGAGTSRPMGMEAPTRSKNAVKMAKRRQRQKESRQ</sequence>
<dbReference type="EC" id="2.7.7.48"/>
<dbReference type="EMBL" id="EF688065">
    <property type="protein sequence ID" value="ABS18957.1"/>
    <property type="molecule type" value="mRNA"/>
</dbReference>
<dbReference type="SMR" id="A7L9Z4"/>
<dbReference type="Proteomes" id="UP000007429">
    <property type="component" value="Genome"/>
</dbReference>
<dbReference type="GO" id="GO:0044423">
    <property type="term" value="C:virion component"/>
    <property type="evidence" value="ECO:0007669"/>
    <property type="project" value="UniProtKB-KW"/>
</dbReference>
<dbReference type="GO" id="GO:0005525">
    <property type="term" value="F:GTP binding"/>
    <property type="evidence" value="ECO:0007669"/>
    <property type="project" value="UniProtKB-KW"/>
</dbReference>
<dbReference type="GO" id="GO:0003968">
    <property type="term" value="F:RNA-directed RNA polymerase activity"/>
    <property type="evidence" value="ECO:0007669"/>
    <property type="project" value="UniProtKB-KW"/>
</dbReference>
<dbReference type="GO" id="GO:0019079">
    <property type="term" value="P:viral genome replication"/>
    <property type="evidence" value="ECO:0007669"/>
    <property type="project" value="InterPro"/>
</dbReference>
<dbReference type="Gene3D" id="1.10.1740.80">
    <property type="match status" value="1"/>
</dbReference>
<dbReference type="Gene3D" id="6.10.140.300">
    <property type="match status" value="1"/>
</dbReference>
<dbReference type="Gene3D" id="3.90.1730.10">
    <property type="entry name" value="Infectious bursal virus vp1 polymerase domain"/>
    <property type="match status" value="3"/>
</dbReference>
<dbReference type="InterPro" id="IPR046814">
    <property type="entry name" value="Avibirnavurs_RdRp_C_sf"/>
</dbReference>
<dbReference type="InterPro" id="IPR046750">
    <property type="entry name" value="Birnavirus_RdRp_C"/>
</dbReference>
<dbReference type="InterPro" id="IPR007100">
    <property type="entry name" value="Birnavirus_RdRp_palm"/>
</dbReference>
<dbReference type="InterPro" id="IPR046812">
    <property type="entry name" value="Birnavirus_RdRp_palm_sf"/>
</dbReference>
<dbReference type="InterPro" id="IPR046752">
    <property type="entry name" value="Birnavirus_RdRp_thumb"/>
</dbReference>
<dbReference type="InterPro" id="IPR046813">
    <property type="entry name" value="Birnavirus_RdRp_thumb_sf"/>
</dbReference>
<dbReference type="InterPro" id="IPR043502">
    <property type="entry name" value="DNA/RNA_pol_sf"/>
</dbReference>
<dbReference type="Pfam" id="PF20489">
    <property type="entry name" value="Birna_RdRp_C"/>
    <property type="match status" value="1"/>
</dbReference>
<dbReference type="Pfam" id="PF04197">
    <property type="entry name" value="Birna_RdRp_palm"/>
    <property type="match status" value="1"/>
</dbReference>
<dbReference type="Pfam" id="PF20488">
    <property type="entry name" value="Birna_VP1_thumb"/>
    <property type="match status" value="1"/>
</dbReference>
<dbReference type="SUPFAM" id="SSF56672">
    <property type="entry name" value="DNA/RNA polymerases"/>
    <property type="match status" value="1"/>
</dbReference>
<dbReference type="PROSITE" id="PS50524">
    <property type="entry name" value="RDRP_DSRNA_BIR"/>
    <property type="match status" value="1"/>
</dbReference>
<keyword id="KW-0191">Covalent protein-RNA linkage</keyword>
<keyword id="KW-0342">GTP-binding</keyword>
<keyword id="KW-0547">Nucleotide-binding</keyword>
<keyword id="KW-0548">Nucleotidyltransferase</keyword>
<keyword id="KW-0597">Phosphoprotein</keyword>
<keyword id="KW-0696">RNA-directed RNA polymerase</keyword>
<keyword id="KW-0808">Transferase</keyword>
<keyword id="KW-0693">Viral RNA replication</keyword>
<keyword id="KW-0946">Virion</keyword>
<protein>
    <recommendedName>
        <fullName>RNA-directed RNA polymerase</fullName>
        <shortName>RDRP</shortName>
        <ecNumber>2.7.7.48</ecNumber>
    </recommendedName>
    <alternativeName>
        <fullName>Protein VP1</fullName>
    </alternativeName>
</protein>
<organism>
    <name type="scientific">Avian infectious bursal disease virus (strain Chicken/Cuba/Soroa/1998)</name>
    <name type="common">IBDV</name>
    <name type="synonym">Gumboro disease virus</name>
    <dbReference type="NCBI Taxonomy" id="645118"/>
    <lineage>
        <taxon>Viruses</taxon>
        <taxon>Riboviria</taxon>
        <taxon>Orthornavirae</taxon>
        <taxon>Birnaviridae</taxon>
        <taxon>Avibirnavirus</taxon>
        <taxon>Avibirnavirus gumboroense</taxon>
    </lineage>
</organism>
<reference key="1">
    <citation type="journal article" date="1999" name="J. Virol.">
        <title>VP1, the putative RNA-dependent RNA polymerase of infectious bursal disease virus, forms complexes with the capsid protein VP3, leading to efficient encapsidation into virus-like particles.</title>
        <authorList>
            <person name="Lombardo E."/>
            <person name="Maraver A."/>
            <person name="Caston J.R."/>
            <person name="Rivera J."/>
            <person name="Fernandez-Arias A."/>
            <person name="Serrano A."/>
            <person name="Carrascosa J.L."/>
            <person name="Rodriguez J.F."/>
        </authorList>
    </citation>
    <scope>NUCLEOTIDE SEQUENCE [GENOMIC RNA]</scope>
</reference>
<reference key="2">
    <citation type="journal article" date="2003" name="J. Virol.">
        <title>Identification and molecular characterization of the RNA polymerase-binding motif of infectious bursal disease virus inner capsid protein VP3.</title>
        <authorList>
            <person name="Maraver A."/>
            <person name="Clemente R."/>
            <person name="Rodriguez J.F."/>
            <person name="Lombardo E."/>
        </authorList>
    </citation>
    <scope>NUCLEOTIDE SEQUENCE [GENOMIC RNA]</scope>
</reference>
<accession>A7L9Z4</accession>